<protein>
    <recommendedName>
        <fullName evidence="1">Cobyric acid synthase</fullName>
    </recommendedName>
</protein>
<feature type="chain" id="PRO_1000116911" description="Cobyric acid synthase">
    <location>
        <begin position="1"/>
        <end position="484"/>
    </location>
</feature>
<feature type="domain" description="GATase cobBQ-type" evidence="1">
    <location>
        <begin position="251"/>
        <end position="438"/>
    </location>
</feature>
<feature type="active site" description="Nucleophile" evidence="1">
    <location>
        <position position="333"/>
    </location>
</feature>
<feature type="active site" evidence="1">
    <location>
        <position position="430"/>
    </location>
</feature>
<reference key="1">
    <citation type="journal article" date="2009" name="Appl. Environ. Microbiol.">
        <title>Rhizobium sp. strain NGR234 possesses a remarkable number of secretion systems.</title>
        <authorList>
            <person name="Schmeisser C."/>
            <person name="Liesegang H."/>
            <person name="Krysciak D."/>
            <person name="Bakkou N."/>
            <person name="Le Quere A."/>
            <person name="Wollherr A."/>
            <person name="Heinemeyer I."/>
            <person name="Morgenstern B."/>
            <person name="Pommerening-Roeser A."/>
            <person name="Flores M."/>
            <person name="Palacios R."/>
            <person name="Brenner S."/>
            <person name="Gottschalk G."/>
            <person name="Schmitz R.A."/>
            <person name="Broughton W.J."/>
            <person name="Perret X."/>
            <person name="Strittmatter A.W."/>
            <person name="Streit W.R."/>
        </authorList>
    </citation>
    <scope>NUCLEOTIDE SEQUENCE [LARGE SCALE GENOMIC DNA]</scope>
    <source>
        <strain>NBRC 101917 / NGR234</strain>
    </source>
</reference>
<evidence type="ECO:0000255" key="1">
    <source>
        <dbReference type="HAMAP-Rule" id="MF_00028"/>
    </source>
</evidence>
<gene>
    <name evidence="1" type="primary">cobQ</name>
    <name type="ordered locus">NGR_c18240</name>
</gene>
<comment type="function">
    <text evidence="1">Catalyzes amidations at positions B, D, E, and G on adenosylcobyrinic A,C-diamide. NH(2) groups are provided by glutamine, and one molecule of ATP is hydrogenolyzed for each amidation.</text>
</comment>
<comment type="pathway">
    <text evidence="1">Cofactor biosynthesis; adenosylcobalamin biosynthesis.</text>
</comment>
<comment type="similarity">
    <text evidence="1">Belongs to the CobB/CobQ family. CobQ subfamily.</text>
</comment>
<proteinExistence type="inferred from homology"/>
<keyword id="KW-0169">Cobalamin biosynthesis</keyword>
<keyword id="KW-0315">Glutamine amidotransferase</keyword>
<keyword id="KW-1185">Reference proteome</keyword>
<organism>
    <name type="scientific">Sinorhizobium fredii (strain NBRC 101917 / NGR234)</name>
    <dbReference type="NCBI Taxonomy" id="394"/>
    <lineage>
        <taxon>Bacteria</taxon>
        <taxon>Pseudomonadati</taxon>
        <taxon>Pseudomonadota</taxon>
        <taxon>Alphaproteobacteria</taxon>
        <taxon>Hyphomicrobiales</taxon>
        <taxon>Rhizobiaceae</taxon>
        <taxon>Sinorhizobium/Ensifer group</taxon>
        <taxon>Sinorhizobium</taxon>
    </lineage>
</organism>
<accession>C3MDR9</accession>
<name>COBQ_SINFN</name>
<sequence>MTRAIMLQGTGSDVGKSVLVAGLCRLAANRGLKVRPFKPQNMSNNAAVSDDGGEIGRAQWLQSLAARVPSSVHMNPVLLKPQSDVGSQVILQGKVAGQAKGREYQALKPKLLGAVMESFGRVSAGADLVVVEGAGSPAEINLRAGDIANMGFATHANVPVVLVGDIDRGGVIASLVGTHAILPEEDRRMVAGYLINKFRGDVSLFDDGIAAVGRFTGWPCFGVVPWLKSAARLPAEDSVVLEKLARGSGKALKVAVPVLSRIANFDDLDPLAAEPEVELVFVRPGMSLPQDAGLVVIPGSKSTISDLKNFRAQGWDRDLERHVRRGGRVIGICGGYQILGTRVADPLGIEGSEREIAGLGLLSVETEMAPEKTVRNSRAWSLEHDVGLEGYEIHLGKTTGADCERAPVTIDGRPDGAMSADGRVMGTYLHGLFGSDAYRAALLKSLGIEGGGANYRQSVDSALDEIAAELEGVLDGAWLNRLLG</sequence>
<dbReference type="EMBL" id="CP001389">
    <property type="protein sequence ID" value="ACP25588.1"/>
    <property type="molecule type" value="Genomic_DNA"/>
</dbReference>
<dbReference type="RefSeq" id="WP_012708353.1">
    <property type="nucleotide sequence ID" value="NC_012587.1"/>
</dbReference>
<dbReference type="RefSeq" id="YP_002826341.1">
    <property type="nucleotide sequence ID" value="NC_012587.1"/>
</dbReference>
<dbReference type="SMR" id="C3MDR9"/>
<dbReference type="STRING" id="394.NGR_c18240"/>
<dbReference type="KEGG" id="rhi:NGR_c18240"/>
<dbReference type="PATRIC" id="fig|394.7.peg.4651"/>
<dbReference type="eggNOG" id="COG1492">
    <property type="taxonomic scope" value="Bacteria"/>
</dbReference>
<dbReference type="HOGENOM" id="CLU_019250_2_2_5"/>
<dbReference type="OrthoDB" id="9808302at2"/>
<dbReference type="UniPathway" id="UPA00148"/>
<dbReference type="Proteomes" id="UP000001054">
    <property type="component" value="Chromosome"/>
</dbReference>
<dbReference type="GO" id="GO:0015420">
    <property type="term" value="F:ABC-type vitamin B12 transporter activity"/>
    <property type="evidence" value="ECO:0007669"/>
    <property type="project" value="UniProtKB-UniRule"/>
</dbReference>
<dbReference type="GO" id="GO:0003824">
    <property type="term" value="F:catalytic activity"/>
    <property type="evidence" value="ECO:0007669"/>
    <property type="project" value="InterPro"/>
</dbReference>
<dbReference type="GO" id="GO:0009236">
    <property type="term" value="P:cobalamin biosynthetic process"/>
    <property type="evidence" value="ECO:0007669"/>
    <property type="project" value="UniProtKB-UniRule"/>
</dbReference>
<dbReference type="CDD" id="cd05389">
    <property type="entry name" value="CobQ_N"/>
    <property type="match status" value="1"/>
</dbReference>
<dbReference type="CDD" id="cd01750">
    <property type="entry name" value="GATase1_CobQ"/>
    <property type="match status" value="1"/>
</dbReference>
<dbReference type="Gene3D" id="3.40.50.880">
    <property type="match status" value="1"/>
</dbReference>
<dbReference type="Gene3D" id="3.40.50.300">
    <property type="entry name" value="P-loop containing nucleotide triphosphate hydrolases"/>
    <property type="match status" value="1"/>
</dbReference>
<dbReference type="HAMAP" id="MF_00028">
    <property type="entry name" value="CobQ"/>
    <property type="match status" value="1"/>
</dbReference>
<dbReference type="InterPro" id="IPR029062">
    <property type="entry name" value="Class_I_gatase-like"/>
</dbReference>
<dbReference type="InterPro" id="IPR002586">
    <property type="entry name" value="CobQ/CobB/MinD/ParA_Nub-bd_dom"/>
</dbReference>
<dbReference type="InterPro" id="IPR033949">
    <property type="entry name" value="CobQ_GATase1"/>
</dbReference>
<dbReference type="InterPro" id="IPR047045">
    <property type="entry name" value="CobQ_N"/>
</dbReference>
<dbReference type="InterPro" id="IPR004459">
    <property type="entry name" value="CobQ_synth"/>
</dbReference>
<dbReference type="InterPro" id="IPR011698">
    <property type="entry name" value="GATase_3"/>
</dbReference>
<dbReference type="InterPro" id="IPR027417">
    <property type="entry name" value="P-loop_NTPase"/>
</dbReference>
<dbReference type="NCBIfam" id="TIGR00313">
    <property type="entry name" value="cobQ"/>
    <property type="match status" value="1"/>
</dbReference>
<dbReference type="NCBIfam" id="NF001989">
    <property type="entry name" value="PRK00784.1"/>
    <property type="match status" value="1"/>
</dbReference>
<dbReference type="PANTHER" id="PTHR21343:SF1">
    <property type="entry name" value="COBYRIC ACID SYNTHASE"/>
    <property type="match status" value="1"/>
</dbReference>
<dbReference type="PANTHER" id="PTHR21343">
    <property type="entry name" value="DETHIOBIOTIN SYNTHETASE"/>
    <property type="match status" value="1"/>
</dbReference>
<dbReference type="Pfam" id="PF01656">
    <property type="entry name" value="CbiA"/>
    <property type="match status" value="1"/>
</dbReference>
<dbReference type="Pfam" id="PF07685">
    <property type="entry name" value="GATase_3"/>
    <property type="match status" value="1"/>
</dbReference>
<dbReference type="SUPFAM" id="SSF52317">
    <property type="entry name" value="Class I glutamine amidotransferase-like"/>
    <property type="match status" value="1"/>
</dbReference>
<dbReference type="SUPFAM" id="SSF52540">
    <property type="entry name" value="P-loop containing nucleoside triphosphate hydrolases"/>
    <property type="match status" value="1"/>
</dbReference>
<dbReference type="PROSITE" id="PS51274">
    <property type="entry name" value="GATASE_COBBQ"/>
    <property type="match status" value="1"/>
</dbReference>